<comment type="function">
    <text evidence="1">Catalyzes the ATP-dependent phosphorylation of N-acetyl-L-glutamate.</text>
</comment>
<comment type="catalytic activity">
    <reaction evidence="1">
        <text>N-acetyl-L-glutamate + ATP = N-acetyl-L-glutamyl 5-phosphate + ADP</text>
        <dbReference type="Rhea" id="RHEA:14629"/>
        <dbReference type="ChEBI" id="CHEBI:30616"/>
        <dbReference type="ChEBI" id="CHEBI:44337"/>
        <dbReference type="ChEBI" id="CHEBI:57936"/>
        <dbReference type="ChEBI" id="CHEBI:456216"/>
        <dbReference type="EC" id="2.7.2.8"/>
    </reaction>
</comment>
<comment type="pathway">
    <text evidence="1">Amino-acid biosynthesis; L-arginine biosynthesis; N(2)-acetyl-L-ornithine from L-glutamate: step 2/4.</text>
</comment>
<comment type="subcellular location">
    <subcellularLocation>
        <location evidence="1">Cytoplasm</location>
    </subcellularLocation>
</comment>
<comment type="similarity">
    <text evidence="1">Belongs to the acetylglutamate kinase family. ArgB subfamily.</text>
</comment>
<organism>
    <name type="scientific">Pseudomonas paraeruginosa (strain DSM 24068 / PA7)</name>
    <name type="common">Pseudomonas aeruginosa (strain PA7)</name>
    <dbReference type="NCBI Taxonomy" id="381754"/>
    <lineage>
        <taxon>Bacteria</taxon>
        <taxon>Pseudomonadati</taxon>
        <taxon>Pseudomonadota</taxon>
        <taxon>Gammaproteobacteria</taxon>
        <taxon>Pseudomonadales</taxon>
        <taxon>Pseudomonadaceae</taxon>
        <taxon>Pseudomonas</taxon>
        <taxon>Pseudomonas paraeruginosa</taxon>
    </lineage>
</organism>
<sequence length="301" mass="31921">MTLSRDDAAQVAKVLSEALPYIRRFVGKTLVIKYGGNAMESEELKAGFARDVVLMKAVGINPVVVHGGGPQIGDLLKRLSIESHFIDGMRVTDAATMDVVEMVLGGQVNKDIVNLINRHGGSAIGLTGKDAELIRAKKLTVTRQTPEMTKPEIIDIGHVGEVTGVNVELLNMLVKGDFIPVIAPIGVGSNGESYNINADLVAGKVAEALKAEKLMLLTNIAGLMDKQGQVLTGLSTEQVNELIADGTIYGGMLPKIRCALEAVQGGVTSAHIIDGRVPNAVLLEIFTDSGVGTLISNRKRH</sequence>
<evidence type="ECO:0000255" key="1">
    <source>
        <dbReference type="HAMAP-Rule" id="MF_00082"/>
    </source>
</evidence>
<reference key="1">
    <citation type="submission" date="2007-06" db="EMBL/GenBank/DDBJ databases">
        <authorList>
            <person name="Dodson R.J."/>
            <person name="Harkins D."/>
            <person name="Paulsen I.T."/>
        </authorList>
    </citation>
    <scope>NUCLEOTIDE SEQUENCE [LARGE SCALE GENOMIC DNA]</scope>
    <source>
        <strain>DSM 24068 / PA7</strain>
    </source>
</reference>
<protein>
    <recommendedName>
        <fullName evidence="1">Acetylglutamate kinase</fullName>
        <ecNumber evidence="1">2.7.2.8</ecNumber>
    </recommendedName>
    <alternativeName>
        <fullName evidence="1">N-acetyl-L-glutamate 5-phosphotransferase</fullName>
    </alternativeName>
    <alternativeName>
        <fullName evidence="1">NAG kinase</fullName>
        <shortName evidence="1">NAGK</shortName>
    </alternativeName>
</protein>
<feature type="chain" id="PRO_1000010527" description="Acetylglutamate kinase">
    <location>
        <begin position="1"/>
        <end position="301"/>
    </location>
</feature>
<feature type="binding site" evidence="1">
    <location>
        <begin position="68"/>
        <end position="69"/>
    </location>
    <ligand>
        <name>substrate</name>
    </ligand>
</feature>
<feature type="binding site" evidence="1">
    <location>
        <position position="90"/>
    </location>
    <ligand>
        <name>substrate</name>
    </ligand>
</feature>
<feature type="binding site" evidence="1">
    <location>
        <position position="195"/>
    </location>
    <ligand>
        <name>substrate</name>
    </ligand>
</feature>
<feature type="site" description="Transition state stabilizer" evidence="1">
    <location>
        <position position="33"/>
    </location>
</feature>
<feature type="site" description="Transition state stabilizer" evidence="1">
    <location>
        <position position="255"/>
    </location>
</feature>
<name>ARGB_PSEP7</name>
<accession>A6VED0</accession>
<keyword id="KW-0028">Amino-acid biosynthesis</keyword>
<keyword id="KW-0055">Arginine biosynthesis</keyword>
<keyword id="KW-0067">ATP-binding</keyword>
<keyword id="KW-0963">Cytoplasm</keyword>
<keyword id="KW-0418">Kinase</keyword>
<keyword id="KW-0547">Nucleotide-binding</keyword>
<keyword id="KW-0808">Transferase</keyword>
<dbReference type="EC" id="2.7.2.8" evidence="1"/>
<dbReference type="EMBL" id="CP000744">
    <property type="protein sequence ID" value="ABR84340.1"/>
    <property type="molecule type" value="Genomic_DNA"/>
</dbReference>
<dbReference type="RefSeq" id="WP_003157944.1">
    <property type="nucleotide sequence ID" value="NC_009656.1"/>
</dbReference>
<dbReference type="SMR" id="A6VED0"/>
<dbReference type="GeneID" id="77223854"/>
<dbReference type="KEGG" id="pap:PSPA7_6099"/>
<dbReference type="HOGENOM" id="CLU_053680_0_0_6"/>
<dbReference type="UniPathway" id="UPA00068">
    <property type="reaction ID" value="UER00107"/>
</dbReference>
<dbReference type="Proteomes" id="UP000001582">
    <property type="component" value="Chromosome"/>
</dbReference>
<dbReference type="GO" id="GO:0005737">
    <property type="term" value="C:cytoplasm"/>
    <property type="evidence" value="ECO:0007669"/>
    <property type="project" value="UniProtKB-SubCell"/>
</dbReference>
<dbReference type="GO" id="GO:0003991">
    <property type="term" value="F:acetylglutamate kinase activity"/>
    <property type="evidence" value="ECO:0007669"/>
    <property type="project" value="UniProtKB-UniRule"/>
</dbReference>
<dbReference type="GO" id="GO:0005524">
    <property type="term" value="F:ATP binding"/>
    <property type="evidence" value="ECO:0007669"/>
    <property type="project" value="UniProtKB-UniRule"/>
</dbReference>
<dbReference type="GO" id="GO:0042450">
    <property type="term" value="P:arginine biosynthetic process via ornithine"/>
    <property type="evidence" value="ECO:0007669"/>
    <property type="project" value="UniProtKB-UniRule"/>
</dbReference>
<dbReference type="GO" id="GO:0006526">
    <property type="term" value="P:L-arginine biosynthetic process"/>
    <property type="evidence" value="ECO:0007669"/>
    <property type="project" value="UniProtKB-UniPathway"/>
</dbReference>
<dbReference type="CDD" id="cd04250">
    <property type="entry name" value="AAK_NAGK-C"/>
    <property type="match status" value="1"/>
</dbReference>
<dbReference type="FunFam" id="3.40.1160.10:FF:000004">
    <property type="entry name" value="Acetylglutamate kinase"/>
    <property type="match status" value="1"/>
</dbReference>
<dbReference type="Gene3D" id="3.40.1160.10">
    <property type="entry name" value="Acetylglutamate kinase-like"/>
    <property type="match status" value="1"/>
</dbReference>
<dbReference type="HAMAP" id="MF_00082">
    <property type="entry name" value="ArgB"/>
    <property type="match status" value="1"/>
</dbReference>
<dbReference type="InterPro" id="IPR036393">
    <property type="entry name" value="AceGlu_kinase-like_sf"/>
</dbReference>
<dbReference type="InterPro" id="IPR004662">
    <property type="entry name" value="AcgluKinase_fam"/>
</dbReference>
<dbReference type="InterPro" id="IPR037528">
    <property type="entry name" value="ArgB"/>
</dbReference>
<dbReference type="InterPro" id="IPR001048">
    <property type="entry name" value="Asp/Glu/Uridylate_kinase"/>
</dbReference>
<dbReference type="InterPro" id="IPR001057">
    <property type="entry name" value="Glu/AcGlu_kinase"/>
</dbReference>
<dbReference type="InterPro" id="IPR041727">
    <property type="entry name" value="NAGK-C"/>
</dbReference>
<dbReference type="NCBIfam" id="TIGR00761">
    <property type="entry name" value="argB"/>
    <property type="match status" value="1"/>
</dbReference>
<dbReference type="PANTHER" id="PTHR23342">
    <property type="entry name" value="N-ACETYLGLUTAMATE SYNTHASE"/>
    <property type="match status" value="1"/>
</dbReference>
<dbReference type="PANTHER" id="PTHR23342:SF0">
    <property type="entry name" value="N-ACETYLGLUTAMATE SYNTHASE, MITOCHONDRIAL"/>
    <property type="match status" value="1"/>
</dbReference>
<dbReference type="Pfam" id="PF00696">
    <property type="entry name" value="AA_kinase"/>
    <property type="match status" value="1"/>
</dbReference>
<dbReference type="PIRSF" id="PIRSF000728">
    <property type="entry name" value="NAGK"/>
    <property type="match status" value="1"/>
</dbReference>
<dbReference type="PRINTS" id="PR00474">
    <property type="entry name" value="GLU5KINASE"/>
</dbReference>
<dbReference type="SUPFAM" id="SSF53633">
    <property type="entry name" value="Carbamate kinase-like"/>
    <property type="match status" value="1"/>
</dbReference>
<proteinExistence type="inferred from homology"/>
<gene>
    <name evidence="1" type="primary">argB</name>
    <name type="ordered locus">PSPA7_6099</name>
</gene>